<protein>
    <recommendedName>
        <fullName evidence="1">dCTP deaminase, dUMP-forming</fullName>
        <ecNumber evidence="1">3.5.4.30</ecNumber>
    </recommendedName>
    <alternativeName>
        <fullName evidence="1">Bifunctional dCTP deaminase:dUTPase</fullName>
    </alternativeName>
    <alternativeName>
        <fullName evidence="1">DCD-DUT</fullName>
    </alternativeName>
</protein>
<proteinExistence type="inferred from homology"/>
<comment type="function">
    <text evidence="1">Bifunctional enzyme that catalyzes both the deamination of dCTP to dUTP and the hydrolysis of dUTP to dUMP without releasing the toxic dUTP intermediate.</text>
</comment>
<comment type="catalytic activity">
    <reaction evidence="1">
        <text>dCTP + 2 H2O = dUMP + NH4(+) + diphosphate</text>
        <dbReference type="Rhea" id="RHEA:19205"/>
        <dbReference type="ChEBI" id="CHEBI:15377"/>
        <dbReference type="ChEBI" id="CHEBI:28938"/>
        <dbReference type="ChEBI" id="CHEBI:33019"/>
        <dbReference type="ChEBI" id="CHEBI:61481"/>
        <dbReference type="ChEBI" id="CHEBI:246422"/>
        <dbReference type="EC" id="3.5.4.30"/>
    </reaction>
</comment>
<comment type="pathway">
    <text evidence="1">Pyrimidine metabolism; dUMP biosynthesis; dUMP from dCTP: step 1/1.</text>
</comment>
<comment type="subunit">
    <text evidence="1">Homotrimer.</text>
</comment>
<comment type="similarity">
    <text evidence="1">Belongs to the dCTP deaminase family.</text>
</comment>
<keyword id="KW-0378">Hydrolase</keyword>
<keyword id="KW-0546">Nucleotide metabolism</keyword>
<keyword id="KW-0547">Nucleotide-binding</keyword>
<keyword id="KW-1185">Reference proteome</keyword>
<name>DCDB_BIFLO</name>
<gene>
    <name evidence="1" type="primary">dcd</name>
    <name type="ordered locus">BL1512</name>
</gene>
<organism>
    <name type="scientific">Bifidobacterium longum (strain NCC 2705)</name>
    <dbReference type="NCBI Taxonomy" id="206672"/>
    <lineage>
        <taxon>Bacteria</taxon>
        <taxon>Bacillati</taxon>
        <taxon>Actinomycetota</taxon>
        <taxon>Actinomycetes</taxon>
        <taxon>Bifidobacteriales</taxon>
        <taxon>Bifidobacteriaceae</taxon>
        <taxon>Bifidobacterium</taxon>
    </lineage>
</organism>
<evidence type="ECO:0000255" key="1">
    <source>
        <dbReference type="HAMAP-Rule" id="MF_00146"/>
    </source>
</evidence>
<evidence type="ECO:0000256" key="2">
    <source>
        <dbReference type="SAM" id="MobiDB-lite"/>
    </source>
</evidence>
<accession>Q8G478</accession>
<feature type="chain" id="PRO_0000155965" description="dCTP deaminase, dUMP-forming">
    <location>
        <begin position="1"/>
        <end position="193"/>
    </location>
</feature>
<feature type="region of interest" description="Disordered" evidence="2">
    <location>
        <begin position="162"/>
        <end position="184"/>
    </location>
</feature>
<feature type="compositionally biased region" description="Polar residues" evidence="2">
    <location>
        <begin position="167"/>
        <end position="183"/>
    </location>
</feature>
<feature type="active site" description="Proton donor/acceptor" evidence="1">
    <location>
        <position position="129"/>
    </location>
</feature>
<feature type="binding site" evidence="1">
    <location>
        <begin position="101"/>
        <end position="106"/>
    </location>
    <ligand>
        <name>dCTP</name>
        <dbReference type="ChEBI" id="CHEBI:61481"/>
    </ligand>
</feature>
<feature type="binding site" evidence="1">
    <location>
        <position position="119"/>
    </location>
    <ligand>
        <name>dCTP</name>
        <dbReference type="ChEBI" id="CHEBI:61481"/>
    </ligand>
</feature>
<feature type="binding site" evidence="1">
    <location>
        <begin position="127"/>
        <end position="129"/>
    </location>
    <ligand>
        <name>dCTP</name>
        <dbReference type="ChEBI" id="CHEBI:61481"/>
    </ligand>
</feature>
<feature type="binding site" evidence="1">
    <location>
        <position position="148"/>
    </location>
    <ligand>
        <name>dCTP</name>
        <dbReference type="ChEBI" id="CHEBI:61481"/>
    </ligand>
</feature>
<feature type="binding site" evidence="1">
    <location>
        <position position="162"/>
    </location>
    <ligand>
        <name>dCTP</name>
        <dbReference type="ChEBI" id="CHEBI:61481"/>
    </ligand>
</feature>
<feature type="binding site" evidence="1">
    <location>
        <position position="174"/>
    </location>
    <ligand>
        <name>dCTP</name>
        <dbReference type="ChEBI" id="CHEBI:61481"/>
    </ligand>
</feature>
<feature type="site" description="Important for bifunctional activity" evidence="1">
    <location>
        <begin position="116"/>
        <end position="117"/>
    </location>
</feature>
<reference key="1">
    <citation type="journal article" date="2002" name="Proc. Natl. Acad. Sci. U.S.A.">
        <title>The genome sequence of Bifidobacterium longum reflects its adaptation to the human gastrointestinal tract.</title>
        <authorList>
            <person name="Schell M.A."/>
            <person name="Karmirantzou M."/>
            <person name="Snel B."/>
            <person name="Vilanova D."/>
            <person name="Berger B."/>
            <person name="Pessi G."/>
            <person name="Zwahlen M.-C."/>
            <person name="Desiere F."/>
            <person name="Bork P."/>
            <person name="Delley M."/>
            <person name="Pridmore R.D."/>
            <person name="Arigoni F."/>
        </authorList>
    </citation>
    <scope>NUCLEOTIDE SEQUENCE [LARGE SCALE GENOMIC DNA]</scope>
    <source>
        <strain>NCC 2705</strain>
    </source>
</reference>
<sequence length="193" mass="21464">MLLSDRDILAAQSAGHISLDPWTPEMVQPASIDVRLDRYFRLFNNHAYTYVDPAENQGALTEQFEVAPDEPWILHPGEFALGSTWEYVKLDPSIAARLEGKSSLGRLGILTHSTAGFIDPGFEGHITLELSNVSTLPVKLWPGMKIGQMCFFQLSSPAEHPYGSKGTGSHYQGQRGPTPSRSYENFYRAHIDD</sequence>
<dbReference type="EC" id="3.5.4.30" evidence="1"/>
<dbReference type="EMBL" id="AE014295">
    <property type="protein sequence ID" value="AAN25306.1"/>
    <property type="molecule type" value="Genomic_DNA"/>
</dbReference>
<dbReference type="RefSeq" id="NP_696670.1">
    <property type="nucleotide sequence ID" value="NC_004307.2"/>
</dbReference>
<dbReference type="RefSeq" id="WP_007051821.1">
    <property type="nucleotide sequence ID" value="NC_004307.2"/>
</dbReference>
<dbReference type="SMR" id="Q8G478"/>
<dbReference type="STRING" id="206672.BL1512"/>
<dbReference type="EnsemblBacteria" id="AAN25306">
    <property type="protein sequence ID" value="AAN25306"/>
    <property type="gene ID" value="BL1512"/>
</dbReference>
<dbReference type="GeneID" id="69579108"/>
<dbReference type="KEGG" id="blo:BL1512"/>
<dbReference type="PATRIC" id="fig|206672.9.peg.1416"/>
<dbReference type="HOGENOM" id="CLU_087476_2_0_11"/>
<dbReference type="OrthoDB" id="9780956at2"/>
<dbReference type="PhylomeDB" id="Q8G478"/>
<dbReference type="UniPathway" id="UPA00610">
    <property type="reaction ID" value="UER00667"/>
</dbReference>
<dbReference type="Proteomes" id="UP000000439">
    <property type="component" value="Chromosome"/>
</dbReference>
<dbReference type="GO" id="GO:0033973">
    <property type="term" value="F:dCTP deaminase (dUMP-forming) activity"/>
    <property type="evidence" value="ECO:0007669"/>
    <property type="project" value="UniProtKB-UniRule"/>
</dbReference>
<dbReference type="GO" id="GO:0008829">
    <property type="term" value="F:dCTP deaminase activity"/>
    <property type="evidence" value="ECO:0007669"/>
    <property type="project" value="InterPro"/>
</dbReference>
<dbReference type="GO" id="GO:0000166">
    <property type="term" value="F:nucleotide binding"/>
    <property type="evidence" value="ECO:0007669"/>
    <property type="project" value="UniProtKB-KW"/>
</dbReference>
<dbReference type="GO" id="GO:0006226">
    <property type="term" value="P:dUMP biosynthetic process"/>
    <property type="evidence" value="ECO:0007669"/>
    <property type="project" value="UniProtKB-UniRule"/>
</dbReference>
<dbReference type="GO" id="GO:0006229">
    <property type="term" value="P:dUTP biosynthetic process"/>
    <property type="evidence" value="ECO:0007669"/>
    <property type="project" value="InterPro"/>
</dbReference>
<dbReference type="GO" id="GO:0015949">
    <property type="term" value="P:nucleobase-containing small molecule interconversion"/>
    <property type="evidence" value="ECO:0007669"/>
    <property type="project" value="TreeGrafter"/>
</dbReference>
<dbReference type="CDD" id="cd07557">
    <property type="entry name" value="trimeric_dUTPase"/>
    <property type="match status" value="1"/>
</dbReference>
<dbReference type="FunFam" id="2.70.40.10:FF:000005">
    <property type="entry name" value="dCTP deaminase, dUMP-forming"/>
    <property type="match status" value="1"/>
</dbReference>
<dbReference type="Gene3D" id="2.70.40.10">
    <property type="match status" value="1"/>
</dbReference>
<dbReference type="HAMAP" id="MF_00146">
    <property type="entry name" value="dCTP_deaminase"/>
    <property type="match status" value="1"/>
</dbReference>
<dbReference type="InterPro" id="IPR011962">
    <property type="entry name" value="dCTP_deaminase"/>
</dbReference>
<dbReference type="InterPro" id="IPR036157">
    <property type="entry name" value="dUTPase-like_sf"/>
</dbReference>
<dbReference type="InterPro" id="IPR033704">
    <property type="entry name" value="dUTPase_trimeric"/>
</dbReference>
<dbReference type="NCBIfam" id="TIGR02274">
    <property type="entry name" value="dCTP_deam"/>
    <property type="match status" value="1"/>
</dbReference>
<dbReference type="PANTHER" id="PTHR42680">
    <property type="entry name" value="DCTP DEAMINASE"/>
    <property type="match status" value="1"/>
</dbReference>
<dbReference type="PANTHER" id="PTHR42680:SF3">
    <property type="entry name" value="DCTP DEAMINASE"/>
    <property type="match status" value="1"/>
</dbReference>
<dbReference type="Pfam" id="PF22769">
    <property type="entry name" value="DCD"/>
    <property type="match status" value="1"/>
</dbReference>
<dbReference type="SUPFAM" id="SSF51283">
    <property type="entry name" value="dUTPase-like"/>
    <property type="match status" value="1"/>
</dbReference>